<accession>A8C8K0</accession>
<dbReference type="EMBL" id="CY026215">
    <property type="protein sequence ID" value="ABV45931.1"/>
    <property type="molecule type" value="Viral_cRNA"/>
</dbReference>
<dbReference type="SMR" id="A8C8K0"/>
<dbReference type="Proteomes" id="UP001395887">
    <property type="component" value="Genome"/>
</dbReference>
<dbReference type="GO" id="GO:0030430">
    <property type="term" value="C:host cell cytoplasm"/>
    <property type="evidence" value="ECO:0007669"/>
    <property type="project" value="UniProtKB-SubCell"/>
</dbReference>
<dbReference type="GO" id="GO:0042025">
    <property type="term" value="C:host cell nucleus"/>
    <property type="evidence" value="ECO:0007669"/>
    <property type="project" value="UniProtKB-SubCell"/>
</dbReference>
<dbReference type="GO" id="GO:0030291">
    <property type="term" value="F:protein serine/threonine kinase inhibitor activity"/>
    <property type="evidence" value="ECO:0007669"/>
    <property type="project" value="UniProtKB-KW"/>
</dbReference>
<dbReference type="GO" id="GO:0003723">
    <property type="term" value="F:RNA binding"/>
    <property type="evidence" value="ECO:0007669"/>
    <property type="project" value="UniProtKB-KW"/>
</dbReference>
<dbReference type="GO" id="GO:0039540">
    <property type="term" value="P:symbiont-mediated suppression of host cytoplasmic pattern recognition receptor signaling pathway via inhibition of RIG-I activity"/>
    <property type="evidence" value="ECO:0007669"/>
    <property type="project" value="UniProtKB-KW"/>
</dbReference>
<dbReference type="GO" id="GO:0039657">
    <property type="term" value="P:symbiont-mediated suppression of host gene expression"/>
    <property type="evidence" value="ECO:0007669"/>
    <property type="project" value="UniProtKB-KW"/>
</dbReference>
<dbReference type="GO" id="GO:0039524">
    <property type="term" value="P:symbiont-mediated suppression of host mRNA processing"/>
    <property type="evidence" value="ECO:0007669"/>
    <property type="project" value="UniProtKB-KW"/>
</dbReference>
<dbReference type="GO" id="GO:0039580">
    <property type="term" value="P:symbiont-mediated suppression of host PKR/eIFalpha signaling"/>
    <property type="evidence" value="ECO:0007669"/>
    <property type="project" value="UniProtKB-KW"/>
</dbReference>
<dbReference type="GO" id="GO:0039502">
    <property type="term" value="P:symbiont-mediated suppression of host type I interferon-mediated signaling pathway"/>
    <property type="evidence" value="ECO:0007669"/>
    <property type="project" value="UniProtKB-KW"/>
</dbReference>
<dbReference type="FunFam" id="1.10.287.10:FF:000001">
    <property type="entry name" value="Non-structural protein 1"/>
    <property type="match status" value="1"/>
</dbReference>
<dbReference type="FunFam" id="3.30.420.330:FF:000001">
    <property type="entry name" value="Non-structural protein 1"/>
    <property type="match status" value="1"/>
</dbReference>
<dbReference type="Gene3D" id="3.30.420.330">
    <property type="entry name" value="Influenza virus non-structural protein, effector domain"/>
    <property type="match status" value="1"/>
</dbReference>
<dbReference type="Gene3D" id="1.10.287.10">
    <property type="entry name" value="S15/NS1, RNA-binding"/>
    <property type="match status" value="1"/>
</dbReference>
<dbReference type="HAMAP" id="MF_04066">
    <property type="entry name" value="INFV_NS1"/>
    <property type="match status" value="1"/>
</dbReference>
<dbReference type="InterPro" id="IPR004208">
    <property type="entry name" value="NS1"/>
</dbReference>
<dbReference type="InterPro" id="IPR000256">
    <property type="entry name" value="NS1A"/>
</dbReference>
<dbReference type="InterPro" id="IPR038064">
    <property type="entry name" value="NS1A_effect_dom-like_sf"/>
</dbReference>
<dbReference type="InterPro" id="IPR009068">
    <property type="entry name" value="uS15_NS1_RNA-bd_sf"/>
</dbReference>
<dbReference type="Pfam" id="PF00600">
    <property type="entry name" value="Flu_NS1"/>
    <property type="match status" value="1"/>
</dbReference>
<dbReference type="SUPFAM" id="SSF143021">
    <property type="entry name" value="Ns1 effector domain-like"/>
    <property type="match status" value="1"/>
</dbReference>
<dbReference type="SUPFAM" id="SSF47060">
    <property type="entry name" value="S15/NS1 RNA-binding domain"/>
    <property type="match status" value="1"/>
</dbReference>
<evidence type="ECO:0000255" key="1">
    <source>
        <dbReference type="HAMAP-Rule" id="MF_04066"/>
    </source>
</evidence>
<evidence type="ECO:0000256" key="2">
    <source>
        <dbReference type="SAM" id="MobiDB-lite"/>
    </source>
</evidence>
<keyword id="KW-0025">Alternative splicing</keyword>
<keyword id="KW-1262">Eukaryotic host gene expression shutoff by virus</keyword>
<keyword id="KW-1035">Host cytoplasm</keyword>
<keyword id="KW-1190">Host gene expression shutoff by virus</keyword>
<keyword id="KW-1192">Host mRNA suppression by virus</keyword>
<keyword id="KW-1048">Host nucleus</keyword>
<keyword id="KW-0945">Host-virus interaction</keyword>
<keyword id="KW-1090">Inhibition of host innate immune response by virus</keyword>
<keyword id="KW-1114">Inhibition of host interferon signaling pathway by virus</keyword>
<keyword id="KW-1102">Inhibition of host PKR by virus</keyword>
<keyword id="KW-1103">Inhibition of host pre-mRNA processing by virus</keyword>
<keyword id="KW-1088">Inhibition of host RIG-I by virus</keyword>
<keyword id="KW-1113">Inhibition of host RLR pathway by virus</keyword>
<keyword id="KW-0922">Interferon antiviral system evasion</keyword>
<keyword id="KW-0694">RNA-binding</keyword>
<keyword id="KW-0832">Ubl conjugation</keyword>
<keyword id="KW-0899">Viral immunoevasion</keyword>
<reference key="1">
    <citation type="submission" date="2007-09" db="EMBL/GenBank/DDBJ databases">
        <title>The NIAID influenza genome sequencing project.</title>
        <authorList>
            <person name="Spiro D."/>
            <person name="Sengamalay N."/>
            <person name="Boyne A."/>
            <person name="Bera J."/>
            <person name="Zaborsky J."/>
            <person name="Subbu V."/>
            <person name="Sparenborg J."/>
            <person name="Gallagher T."/>
            <person name="Overton L."/>
            <person name="Althoff R."/>
            <person name="Liu X."/>
            <person name="Ghedin E."/>
            <person name="Sitz J."/>
            <person name="Katzel D."/>
            <person name="Neupane R."/>
            <person name="Shumway M."/>
            <person name="Koo H."/>
            <person name="Edelman L."/>
            <person name="Menegus M."/>
            <person name="Mayer C."/>
            <person name="Dale S."/>
            <person name="Bao Y."/>
            <person name="Bolotov P."/>
            <person name="Dernovoy D."/>
            <person name="Kiryutin B."/>
            <person name="Lipman D.J."/>
            <person name="Tatusova T."/>
        </authorList>
    </citation>
    <scope>NUCLEOTIDE SEQUENCE [GENOMIC RNA]</scope>
</reference>
<reference key="2">
    <citation type="submission" date="2007-09" db="EMBL/GenBank/DDBJ databases">
        <authorList>
            <consortium name="The NIAID Influenza Genome Sequencing Consortium"/>
        </authorList>
    </citation>
    <scope>NUCLEOTIDE SEQUENCE [GENOMIC RNA]</scope>
</reference>
<feature type="chain" id="PRO_0000372979" description="Non-structural protein 1">
    <location>
        <begin position="1"/>
        <end position="230"/>
    </location>
</feature>
<feature type="region of interest" description="RNA-binding and homodimerization" evidence="1">
    <location>
        <begin position="1"/>
        <end position="73"/>
    </location>
</feature>
<feature type="region of interest" description="CPSF4-binding" evidence="1">
    <location>
        <begin position="180"/>
        <end position="215"/>
    </location>
</feature>
<feature type="region of interest" description="Disordered" evidence="2">
    <location>
        <begin position="205"/>
        <end position="230"/>
    </location>
</feature>
<feature type="region of interest" description="PABPN1-binding" evidence="1">
    <location>
        <begin position="223"/>
        <end position="230"/>
    </location>
</feature>
<feature type="short sequence motif" description="Nuclear localization signal" evidence="1">
    <location>
        <begin position="34"/>
        <end position="38"/>
    </location>
</feature>
<feature type="short sequence motif" description="Nuclear export signal" evidence="1">
    <location>
        <begin position="137"/>
        <end position="146"/>
    </location>
</feature>
<feature type="compositionally biased region" description="Polar residues" evidence="2">
    <location>
        <begin position="205"/>
        <end position="217"/>
    </location>
</feature>
<gene>
    <name evidence="1" type="primary">NS</name>
</gene>
<proteinExistence type="inferred from homology"/>
<sequence>MDSHTVSSFQVDCFLWHVRKQVADQDLGDAPFLDRLRRDQKSLKGRGSTLGLNIETATCVGKQIVERILKEESDEALKMTMASALASRYLTDMTVEEMSRDWFMLMPKQKVAGPLCVRMDQAIMDKNIILKANFSVIFDRLENLTLLRAFTEEGAIVGEISPLPSFPGHTNEDVKNAIGVLIGGLEWNDNTVRVSETLQRFAWRSSNETGGPPFTTTQKRKMAGTTRSEI</sequence>
<organism>
    <name type="scientific">Influenza A virus (strain A/USA:Texas/UR06-0195/2007 H1N1)</name>
    <dbReference type="NCBI Taxonomy" id="455880"/>
    <lineage>
        <taxon>Viruses</taxon>
        <taxon>Riboviria</taxon>
        <taxon>Orthornavirae</taxon>
        <taxon>Negarnaviricota</taxon>
        <taxon>Polyploviricotina</taxon>
        <taxon>Insthoviricetes</taxon>
        <taxon>Articulavirales</taxon>
        <taxon>Orthomyxoviridae</taxon>
        <taxon>Alphainfluenzavirus</taxon>
        <taxon>Alphainfluenzavirus influenzae</taxon>
        <taxon>Influenza A virus</taxon>
    </lineage>
</organism>
<name>NS1_I07A0</name>
<organismHost>
    <name type="scientific">Aves</name>
    <dbReference type="NCBI Taxonomy" id="8782"/>
</organismHost>
<organismHost>
    <name type="scientific">Homo sapiens</name>
    <name type="common">Human</name>
    <dbReference type="NCBI Taxonomy" id="9606"/>
</organismHost>
<organismHost>
    <name type="scientific">Sus scrofa</name>
    <name type="common">Pig</name>
    <dbReference type="NCBI Taxonomy" id="9823"/>
</organismHost>
<comment type="function">
    <text evidence="1">Inhibits post-transcriptional processing of cellular pre-mRNA, by binding and inhibiting two cellular proteins that are required for the 3'-end processing of cellular pre-mRNAs: the 30 kDa cleavage and polyadenylation specificity factor/CPSF4 and the poly(A)-binding protein 2/PABPN1. In turn, unprocessed 3' end pre-mRNAs accumulate in the host nucleus and are no longer exported to the cytoplasm. Cellular protein synthesis is thereby shut off very early after virus infection. Viral protein synthesis is not affected by the inhibition of the cellular 3' end processing machinery because the poly(A) tails of viral mRNAs are produced by the viral polymerase through a stuttering mechanism. Prevents the establishment of the cellular antiviral state by inhibiting TRIM25-mediated RIGI ubiquitination, which normally triggers the antiviral transduction signal that leads to the activation of type I IFN genes by transcription factors IRF3 and IRF7. Also binds poly(A) and U6 snRNA. Inhibits the integrated stress response (ISR) in the infected cell by blocking dsRNA binding by EIF2AK2/PKR and further phosphorylation of EIF2S1/EIF-2ALPHA. Stress granule formation is thus inhibited, which allows protein synthesis and viral replication.</text>
</comment>
<comment type="subunit">
    <text evidence="1">Homodimer. Interacts with host TRIM25 (via coiled coil); this interaction specifically inhibits TRIM25 multimerization and TRIM25-mediated RIGI CARD ubiquitination. Interacts with human EIF2AK2/PKR, CPSF4, IVNS1ABP and PABPN1.</text>
</comment>
<comment type="subcellular location">
    <subcellularLocation>
        <location evidence="1">Host nucleus</location>
    </subcellularLocation>
    <subcellularLocation>
        <location evidence="1">Host cytoplasm</location>
    </subcellularLocation>
    <text evidence="1">In uninfected, transfected cells, NS1 is localized in the nucleus. Only in virus infected cells, the nuclear export signal is unveiled, presumably by a viral protein, and a fraction of NS1 is exported in the cytoplasm.</text>
</comment>
<comment type="alternative products">
    <event type="alternative splicing"/>
    <isoform>
        <id>A8C8K0-1</id>
        <name>NS1</name>
        <sequence type="displayed"/>
    </isoform>
    <isoform>
        <id>A8C8J9-1</id>
        <name>NEP</name>
        <name>NS2</name>
        <sequence type="external"/>
    </isoform>
</comment>
<comment type="domain">
    <text evidence="1">The dsRNA-binding region is required for suppression of RNA silencing.</text>
</comment>
<comment type="PTM">
    <text evidence="1">Upon interferon induction, ISGylated via host HERC5; this results in the impairment of NS1 interaction with RNA targets due to its inability to form homodimers and to interact with host EIF2AK2/PKR.</text>
</comment>
<comment type="similarity">
    <text evidence="1">Belongs to the influenza A viruses NS1 family.</text>
</comment>
<protein>
    <recommendedName>
        <fullName evidence="1">Non-structural protein 1</fullName>
        <shortName evidence="1">NS1</shortName>
    </recommendedName>
    <alternativeName>
        <fullName evidence="1">NS1A</fullName>
    </alternativeName>
</protein>